<gene>
    <name type="primary">CTF4</name>
    <name type="synonym">CHL15</name>
    <name type="synonym">POB1</name>
    <name type="ordered locus">YPR135W</name>
    <name type="ORF">P9659.7</name>
</gene>
<evidence type="ECO:0000269" key="1">
    <source>
    </source>
</evidence>
<evidence type="ECO:0000269" key="2">
    <source>
    </source>
</evidence>
<evidence type="ECO:0000305" key="3"/>
<evidence type="ECO:0007744" key="4">
    <source>
    </source>
</evidence>
<evidence type="ECO:0007744" key="5">
    <source>
    </source>
</evidence>
<evidence type="ECO:0007744" key="6">
    <source>
    </source>
</evidence>
<evidence type="ECO:0007829" key="7">
    <source>
        <dbReference type="PDB" id="4C8S"/>
    </source>
</evidence>
<evidence type="ECO:0007829" key="8">
    <source>
        <dbReference type="PDB" id="5HOG"/>
    </source>
</evidence>
<evidence type="ECO:0007829" key="9">
    <source>
        <dbReference type="PDB" id="5NXQ"/>
    </source>
</evidence>
<evidence type="ECO:0007829" key="10">
    <source>
        <dbReference type="PDB" id="7PMK"/>
    </source>
</evidence>
<organism>
    <name type="scientific">Saccharomyces cerevisiae (strain ATCC 204508 / S288c)</name>
    <name type="common">Baker's yeast</name>
    <dbReference type="NCBI Taxonomy" id="559292"/>
    <lineage>
        <taxon>Eukaryota</taxon>
        <taxon>Fungi</taxon>
        <taxon>Dikarya</taxon>
        <taxon>Ascomycota</taxon>
        <taxon>Saccharomycotina</taxon>
        <taxon>Saccharomycetes</taxon>
        <taxon>Saccharomycetales</taxon>
        <taxon>Saccharomycetaceae</taxon>
        <taxon>Saccharomyces</taxon>
    </lineage>
</organism>
<comment type="function">
    <text>Accessory factor for DNA replication. It plays a role in accurately duplicating the genome in vivo.</text>
</comment>
<comment type="interaction">
    <interactant intactId="EBI-5209">
        <id>Q01454</id>
    </interactant>
    <interactant intactId="EBI-5209">
        <id>Q01454</id>
        <label>CTF4</label>
    </interactant>
    <organismsDiffer>false</organismsDiffer>
    <experiments>6</experiments>
</comment>
<comment type="interaction">
    <interactant intactId="EBI-5209">
        <id>Q01454</id>
    </interactant>
    <interactant intactId="EBI-31943">
        <id>Q08496</id>
        <label>DIA2</label>
    </interactant>
    <organismsDiffer>false</organismsDiffer>
    <experiments>5</experiments>
</comment>
<comment type="interaction">
    <interactant intactId="EBI-5209">
        <id>Q01454</id>
    </interactant>
    <interactant intactId="EBI-31156">
        <id>Q06164</id>
        <label>MMS22</label>
    </interactant>
    <organismsDiffer>false</organismsDiffer>
    <experiments>4</experiments>
</comment>
<comment type="interaction">
    <interactant intactId="EBI-5209">
        <id>Q01454</id>
    </interactant>
    <interactant intactId="EBI-6128">
        <id>P13382</id>
        <label>POL1</label>
    </interactant>
    <organismsDiffer>false</organismsDiffer>
    <experiments>14</experiments>
</comment>
<comment type="interaction">
    <interactant intactId="EBI-5209">
        <id>Q01454</id>
    </interactant>
    <interactant intactId="EBI-22066">
        <id>Q12488</id>
        <label>PSF1</label>
    </interactant>
    <organismsDiffer>false</organismsDiffer>
    <experiments>7</experiments>
</comment>
<comment type="interaction">
    <interactant intactId="EBI-5209">
        <id>Q01454</id>
    </interactant>
    <interactant intactId="EBI-37437">
        <id>Q03406</id>
        <label>SLD5</label>
    </interactant>
    <organismsDiffer>false</organismsDiffer>
    <experiments>14</experiments>
</comment>
<comment type="subcellular location">
    <subcellularLocation>
        <location>Nucleus</location>
    </subcellularLocation>
</comment>
<comment type="miscellaneous">
    <text evidence="2">Present with 3280 molecules/cell in log phase SD medium.</text>
</comment>
<proteinExistence type="evidence at protein level"/>
<keyword id="KW-0002">3D-structure</keyword>
<keyword id="KW-0903">Direct protein sequencing</keyword>
<keyword id="KW-0235">DNA replication</keyword>
<keyword id="KW-0539">Nucleus</keyword>
<keyword id="KW-0597">Phosphoprotein</keyword>
<keyword id="KW-1185">Reference proteome</keyword>
<keyword id="KW-0677">Repeat</keyword>
<keyword id="KW-0853">WD repeat</keyword>
<reference key="1">
    <citation type="journal article" date="1992" name="Mol. Cell. Biol.">
        <title>Evidence that POB1, a Saccharomyces cerevisiae protein that binds to DNA polymerase alpha, acts in DNA metabolism in vivo.</title>
        <authorList>
            <person name="Miles J."/>
            <person name="Formosa T."/>
        </authorList>
    </citation>
    <scope>NUCLEOTIDE SEQUENCE [GENOMIC DNA]</scope>
    <scope>PROTEIN SEQUENCE OF 2-21</scope>
    <source>
        <strain>7208-12</strain>
    </source>
</reference>
<reference key="2">
    <citation type="journal article" date="1992" name="Mol. Cell. Biol.">
        <title>CTF4 (CHL15) mutants exhibit defective DNA metabolism in the yeast Saccharomyces cerevisiae.</title>
        <authorList>
            <person name="Kouprina N.Y."/>
            <person name="Kroll E.S."/>
            <person name="Bannikov V.M."/>
            <person name="Bliskovsky V.V."/>
            <person name="Gizatullin R.Z."/>
            <person name="Kirillov A.V."/>
            <person name="Shestopalov B.V."/>
            <person name="Zakharyev V.M."/>
            <person name="Hieter P."/>
            <person name="Spencer F."/>
            <person name="Larionov V."/>
        </authorList>
    </citation>
    <scope>NUCLEOTIDE SEQUENCE [GENOMIC DNA]</scope>
</reference>
<reference key="3">
    <citation type="journal article" date="1993" name="Mol. Cell. Biol.">
        <authorList>
            <person name="Kouprina N.Y."/>
            <person name="Kroll E.S."/>
            <person name="Bannikov V.M."/>
            <person name="Bliskovsky V.V."/>
            <person name="Gizatullin R.Z."/>
            <person name="Kirillov A.V."/>
            <person name="Shestopalov B.V."/>
            <person name="Zakharyev V.M."/>
            <person name="Hieter P."/>
            <person name="Spencer F."/>
            <person name="Larionov V."/>
        </authorList>
    </citation>
    <scope>ERRATUM OF PUBMED:1341195</scope>
</reference>
<reference key="4">
    <citation type="journal article" date="1993" name="Mol. Biol. (Mosk.)">
        <title>CHL15 -- a new gene controlling the replication of chromosomes in Saccharomycetes yeast: cloning, physical mapping, sequencing, and sequence analysis.</title>
        <authorList>
            <person name="Kouprina N.Y."/>
            <person name="Kroll E.S."/>
            <person name="Koryabin M.Y."/>
            <person name="Shestopalov B.V."/>
            <person name="Bliskovsky V.V."/>
            <person name="Bannikov V.M."/>
            <person name="Gizatullin R.Z."/>
            <person name="Kirillov A.V."/>
            <person name="Kravtsov V.Y."/>
            <person name="Zakharyev V.M."/>
        </authorList>
    </citation>
    <scope>NUCLEOTIDE SEQUENCE [GENOMIC DNA]</scope>
</reference>
<reference key="5">
    <citation type="journal article" date="1997" name="Nature">
        <title>The nucleotide sequence of Saccharomyces cerevisiae chromosome XVI.</title>
        <authorList>
            <person name="Bussey H."/>
            <person name="Storms R.K."/>
            <person name="Ahmed A."/>
            <person name="Albermann K."/>
            <person name="Allen E."/>
            <person name="Ansorge W."/>
            <person name="Araujo R."/>
            <person name="Aparicio A."/>
            <person name="Barrell B.G."/>
            <person name="Badcock K."/>
            <person name="Benes V."/>
            <person name="Botstein D."/>
            <person name="Bowman S."/>
            <person name="Brueckner M."/>
            <person name="Carpenter J."/>
            <person name="Cherry J.M."/>
            <person name="Chung E."/>
            <person name="Churcher C.M."/>
            <person name="Coster F."/>
            <person name="Davis K."/>
            <person name="Davis R.W."/>
            <person name="Dietrich F.S."/>
            <person name="Delius H."/>
            <person name="DiPaolo T."/>
            <person name="Dubois E."/>
            <person name="Duesterhoeft A."/>
            <person name="Duncan M."/>
            <person name="Floeth M."/>
            <person name="Fortin N."/>
            <person name="Friesen J.D."/>
            <person name="Fritz C."/>
            <person name="Goffeau A."/>
            <person name="Hall J."/>
            <person name="Hebling U."/>
            <person name="Heumann K."/>
            <person name="Hilbert H."/>
            <person name="Hillier L.W."/>
            <person name="Hunicke-Smith S."/>
            <person name="Hyman R.W."/>
            <person name="Johnston M."/>
            <person name="Kalman S."/>
            <person name="Kleine K."/>
            <person name="Komp C."/>
            <person name="Kurdi O."/>
            <person name="Lashkari D."/>
            <person name="Lew H."/>
            <person name="Lin A."/>
            <person name="Lin D."/>
            <person name="Louis E.J."/>
            <person name="Marathe R."/>
            <person name="Messenguy F."/>
            <person name="Mewes H.-W."/>
            <person name="Mirtipati S."/>
            <person name="Moestl D."/>
            <person name="Mueller-Auer S."/>
            <person name="Namath A."/>
            <person name="Nentwich U."/>
            <person name="Oefner P."/>
            <person name="Pearson D."/>
            <person name="Petel F.X."/>
            <person name="Pohl T.M."/>
            <person name="Purnelle B."/>
            <person name="Rajandream M.A."/>
            <person name="Rechmann S."/>
            <person name="Rieger M."/>
            <person name="Riles L."/>
            <person name="Roberts D."/>
            <person name="Schaefer M."/>
            <person name="Scharfe M."/>
            <person name="Scherens B."/>
            <person name="Schramm S."/>
            <person name="Schroeder M."/>
            <person name="Sdicu A.-M."/>
            <person name="Tettelin H."/>
            <person name="Urrestarazu L.A."/>
            <person name="Ushinsky S."/>
            <person name="Vierendeels F."/>
            <person name="Vissers S."/>
            <person name="Voss H."/>
            <person name="Walsh S.V."/>
            <person name="Wambutt R."/>
            <person name="Wang Y."/>
            <person name="Wedler E."/>
            <person name="Wedler H."/>
            <person name="Winnett E."/>
            <person name="Zhong W.-W."/>
            <person name="Zollner A."/>
            <person name="Vo D.H."/>
            <person name="Hani J."/>
        </authorList>
    </citation>
    <scope>NUCLEOTIDE SEQUENCE [LARGE SCALE GENOMIC DNA]</scope>
    <source>
        <strain>ATCC 204508 / S288c</strain>
    </source>
</reference>
<reference key="6">
    <citation type="journal article" date="2014" name="G3 (Bethesda)">
        <title>The reference genome sequence of Saccharomyces cerevisiae: Then and now.</title>
        <authorList>
            <person name="Engel S.R."/>
            <person name="Dietrich F.S."/>
            <person name="Fisk D.G."/>
            <person name="Binkley G."/>
            <person name="Balakrishnan R."/>
            <person name="Costanzo M.C."/>
            <person name="Dwight S.S."/>
            <person name="Hitz B.C."/>
            <person name="Karra K."/>
            <person name="Nash R.S."/>
            <person name="Weng S."/>
            <person name="Wong E.D."/>
            <person name="Lloyd P."/>
            <person name="Skrzypek M.S."/>
            <person name="Miyasato S.R."/>
            <person name="Simison M."/>
            <person name="Cherry J.M."/>
        </authorList>
    </citation>
    <scope>GENOME REANNOTATION</scope>
    <source>
        <strain>ATCC 204508 / S288c</strain>
    </source>
</reference>
<reference key="7">
    <citation type="journal article" date="2003" name="Nature">
        <title>Global analysis of protein expression in yeast.</title>
        <authorList>
            <person name="Ghaemmaghami S."/>
            <person name="Huh W.-K."/>
            <person name="Bower K."/>
            <person name="Howson R.W."/>
            <person name="Belle A."/>
            <person name="Dephoure N."/>
            <person name="O'Shea E.K."/>
            <person name="Weissman J.S."/>
        </authorList>
    </citation>
    <scope>LEVEL OF PROTEIN EXPRESSION [LARGE SCALE ANALYSIS]</scope>
</reference>
<reference key="8">
    <citation type="journal article" date="2007" name="J. Proteome Res.">
        <title>Large-scale phosphorylation analysis of alpha-factor-arrested Saccharomyces cerevisiae.</title>
        <authorList>
            <person name="Li X."/>
            <person name="Gerber S.A."/>
            <person name="Rudner A.D."/>
            <person name="Beausoleil S.A."/>
            <person name="Haas W."/>
            <person name="Villen J."/>
            <person name="Elias J.E."/>
            <person name="Gygi S.P."/>
        </authorList>
    </citation>
    <scope>PHOSPHORYLATION [LARGE SCALE ANALYSIS] AT SER-377 AND SER-379</scope>
    <scope>IDENTIFICATION BY MASS SPECTROMETRY [LARGE SCALE ANALYSIS]</scope>
    <source>
        <strain>ADR376</strain>
    </source>
</reference>
<reference key="9">
    <citation type="journal article" date="2008" name="Mol. Cell. Proteomics">
        <title>A multidimensional chromatography technology for in-depth phosphoproteome analysis.</title>
        <authorList>
            <person name="Albuquerque C.P."/>
            <person name="Smolka M.B."/>
            <person name="Payne S.H."/>
            <person name="Bafna V."/>
            <person name="Eng J."/>
            <person name="Zhou H."/>
        </authorList>
    </citation>
    <scope>PHOSPHORYLATION [LARGE SCALE ANALYSIS] AT SER-377; SER-379; THR-401; THR-411 AND SER-463</scope>
    <scope>IDENTIFICATION BY MASS SPECTROMETRY [LARGE SCALE ANALYSIS]</scope>
</reference>
<reference key="10">
    <citation type="journal article" date="2009" name="Science">
        <title>Global analysis of Cdk1 substrate phosphorylation sites provides insights into evolution.</title>
        <authorList>
            <person name="Holt L.J."/>
            <person name="Tuch B.B."/>
            <person name="Villen J."/>
            <person name="Johnson A.D."/>
            <person name="Gygi S.P."/>
            <person name="Morgan D.O."/>
        </authorList>
    </citation>
    <scope>PHOSPHORYLATION [LARGE SCALE ANALYSIS] AT SER-377; SER-379 AND SER-398</scope>
    <scope>IDENTIFICATION BY MASS SPECTROMETRY [LARGE SCALE ANALYSIS]</scope>
</reference>
<protein>
    <recommendedName>
        <fullName>DNA polymerase alpha-binding protein</fullName>
    </recommendedName>
    <alternativeName>
        <fullName>Chromosome replication protein CHL15</fullName>
    </alternativeName>
    <alternativeName>
        <fullName>Chromosome transmission fidelity protein 4</fullName>
    </alternativeName>
    <alternativeName>
        <fullName>Protein POB1</fullName>
    </alternativeName>
</protein>
<dbReference type="EMBL" id="M94769">
    <property type="protein sequence ID" value="AAA34887.1"/>
    <property type="molecule type" value="Genomic_DNA"/>
</dbReference>
<dbReference type="EMBL" id="S63246">
    <property type="protein sequence ID" value="AAB27308.1"/>
    <property type="molecule type" value="Genomic_DNA"/>
</dbReference>
<dbReference type="EMBL" id="U40829">
    <property type="protein sequence ID" value="AAB68276.1"/>
    <property type="molecule type" value="Genomic_DNA"/>
</dbReference>
<dbReference type="EMBL" id="BK006949">
    <property type="protein sequence ID" value="DAA11548.1"/>
    <property type="molecule type" value="Genomic_DNA"/>
</dbReference>
<dbReference type="PIR" id="A45039">
    <property type="entry name" value="A45039"/>
</dbReference>
<dbReference type="RefSeq" id="NP_015461.1">
    <property type="nucleotide sequence ID" value="NM_001184232.1"/>
</dbReference>
<dbReference type="PDB" id="4C8H">
    <property type="method" value="X-ray"/>
    <property type="resolution" value="2.69 A"/>
    <property type="chains" value="A/B/C=471-927"/>
</dbReference>
<dbReference type="PDB" id="4C8S">
    <property type="method" value="X-ray"/>
    <property type="resolution" value="3.00 A"/>
    <property type="chains" value="A/B/C=471-927"/>
</dbReference>
<dbReference type="PDB" id="4C93">
    <property type="method" value="X-ray"/>
    <property type="resolution" value="2.69 A"/>
    <property type="chains" value="A/B/C=471-927"/>
</dbReference>
<dbReference type="PDB" id="4C95">
    <property type="method" value="X-ray"/>
    <property type="resolution" value="2.69 A"/>
    <property type="chains" value="A/B/C=471-927"/>
</dbReference>
<dbReference type="PDB" id="5HOG">
    <property type="method" value="X-ray"/>
    <property type="resolution" value="3.09 A"/>
    <property type="chains" value="A/B/C=471-927"/>
</dbReference>
<dbReference type="PDB" id="5HOI">
    <property type="method" value="X-ray"/>
    <property type="resolution" value="3.30 A"/>
    <property type="chains" value="A/B/C=472-927"/>
</dbReference>
<dbReference type="PDB" id="5NXQ">
    <property type="method" value="X-ray"/>
    <property type="resolution" value="2.41 A"/>
    <property type="chains" value="A/B/C=471-927"/>
</dbReference>
<dbReference type="PDB" id="6PTJ">
    <property type="method" value="EM"/>
    <property type="resolution" value="3.80 A"/>
    <property type="chains" value="E/F/G=1-927"/>
</dbReference>
<dbReference type="PDB" id="6PTN">
    <property type="method" value="EM"/>
    <property type="resolution" value="5.80 A"/>
    <property type="chains" value="E/F/G=1-927"/>
</dbReference>
<dbReference type="PDB" id="6PTO">
    <property type="method" value="EM"/>
    <property type="resolution" value="7.00 A"/>
    <property type="chains" value="X/Y/Z=1-927"/>
</dbReference>
<dbReference type="PDB" id="6SKL">
    <property type="method" value="EM"/>
    <property type="resolution" value="3.70 A"/>
    <property type="chains" value="F/G/H=1-927"/>
</dbReference>
<dbReference type="PDB" id="7PMK">
    <property type="method" value="EM"/>
    <property type="resolution" value="3.20 A"/>
    <property type="chains" value="F/G/H=1-927"/>
</dbReference>
<dbReference type="PDB" id="7PMN">
    <property type="method" value="EM"/>
    <property type="resolution" value="3.20 A"/>
    <property type="chains" value="F/G/H=1-927"/>
</dbReference>
<dbReference type="PDB" id="8B9A">
    <property type="method" value="EM"/>
    <property type="resolution" value="3.50 A"/>
    <property type="chains" value="H/K/L=1-927"/>
</dbReference>
<dbReference type="PDB" id="8B9B">
    <property type="method" value="EM"/>
    <property type="resolution" value="3.50 A"/>
    <property type="chains" value="H/K/L=1-927"/>
</dbReference>
<dbReference type="PDB" id="8KG6">
    <property type="method" value="EM"/>
    <property type="resolution" value="3.07 A"/>
    <property type="chains" value="F/G/H=1-927"/>
</dbReference>
<dbReference type="PDB" id="8KG8">
    <property type="method" value="EM"/>
    <property type="resolution" value="4.23 A"/>
    <property type="chains" value="F/G/H=1-927"/>
</dbReference>
<dbReference type="PDB" id="8KG9">
    <property type="method" value="EM"/>
    <property type="resolution" value="4.52 A"/>
    <property type="chains" value="F/G/H=1-927"/>
</dbReference>
<dbReference type="PDB" id="8W7M">
    <property type="method" value="EM"/>
    <property type="resolution" value="4.12 A"/>
    <property type="chains" value="F/G/H=1-927"/>
</dbReference>
<dbReference type="PDB" id="8W7S">
    <property type="method" value="EM"/>
    <property type="resolution" value="7.39 A"/>
    <property type="chains" value="F/G/H=1-927"/>
</dbReference>
<dbReference type="PDB" id="8XGC">
    <property type="method" value="EM"/>
    <property type="resolution" value="3.70 A"/>
    <property type="chains" value="F/G/H=1-927"/>
</dbReference>
<dbReference type="PDBsum" id="4C8H"/>
<dbReference type="PDBsum" id="4C8S"/>
<dbReference type="PDBsum" id="4C93"/>
<dbReference type="PDBsum" id="4C95"/>
<dbReference type="PDBsum" id="5HOG"/>
<dbReference type="PDBsum" id="5HOI"/>
<dbReference type="PDBsum" id="5NXQ"/>
<dbReference type="PDBsum" id="6PTJ"/>
<dbReference type="PDBsum" id="6PTN"/>
<dbReference type="PDBsum" id="6PTO"/>
<dbReference type="PDBsum" id="6SKL"/>
<dbReference type="PDBsum" id="7PMK"/>
<dbReference type="PDBsum" id="7PMN"/>
<dbReference type="PDBsum" id="8B9A"/>
<dbReference type="PDBsum" id="8B9B"/>
<dbReference type="PDBsum" id="8KG6"/>
<dbReference type="PDBsum" id="8KG8"/>
<dbReference type="PDBsum" id="8KG9"/>
<dbReference type="PDBsum" id="8W7M"/>
<dbReference type="PDBsum" id="8W7S"/>
<dbReference type="PDBsum" id="8XGC"/>
<dbReference type="EMDB" id="EMD-10227"/>
<dbReference type="EMDB" id="EMD-13539"/>
<dbReference type="EMDB" id="EMD-20471"/>
<dbReference type="EMDB" id="EMD-20472"/>
<dbReference type="EMDB" id="EMD-20473"/>
<dbReference type="EMDB" id="EMD-37211"/>
<dbReference type="EMDB" id="EMD-37213"/>
<dbReference type="EMDB" id="EMD-37215"/>
<dbReference type="EMDB" id="EMD-37343"/>
<dbReference type="EMDB" id="EMD-37345"/>
<dbReference type="EMDB" id="EMD-38317"/>
<dbReference type="SMR" id="Q01454"/>
<dbReference type="BioGRID" id="36302">
    <property type="interactions" value="652"/>
</dbReference>
<dbReference type="ComplexPortal" id="CPX-1165">
    <property type="entry name" value="CUL8-MMS1-MMS22-CTF4 E3 ubiquitin ligase complex"/>
</dbReference>
<dbReference type="DIP" id="DIP-4640N"/>
<dbReference type="FunCoup" id="Q01454">
    <property type="interactions" value="420"/>
</dbReference>
<dbReference type="IntAct" id="Q01454">
    <property type="interactions" value="65"/>
</dbReference>
<dbReference type="MINT" id="Q01454"/>
<dbReference type="STRING" id="4932.YPR135W"/>
<dbReference type="iPTMnet" id="Q01454"/>
<dbReference type="PaxDb" id="4932-YPR135W"/>
<dbReference type="PeptideAtlas" id="Q01454"/>
<dbReference type="EnsemblFungi" id="YPR135W_mRNA">
    <property type="protein sequence ID" value="YPR135W"/>
    <property type="gene ID" value="YPR135W"/>
</dbReference>
<dbReference type="GeneID" id="856254"/>
<dbReference type="KEGG" id="sce:YPR135W"/>
<dbReference type="AGR" id="SGD:S000006339"/>
<dbReference type="SGD" id="S000006339">
    <property type="gene designation" value="CTF4"/>
</dbReference>
<dbReference type="VEuPathDB" id="FungiDB:YPR135W"/>
<dbReference type="eggNOG" id="KOG1274">
    <property type="taxonomic scope" value="Eukaryota"/>
</dbReference>
<dbReference type="GeneTree" id="ENSGT00390000002030"/>
<dbReference type="HOGENOM" id="CLU_004219_2_0_1"/>
<dbReference type="InParanoid" id="Q01454"/>
<dbReference type="OMA" id="RYAHTNG"/>
<dbReference type="OrthoDB" id="427368at2759"/>
<dbReference type="BioCyc" id="YEAST:G3O-34271-MONOMER"/>
<dbReference type="BioGRID-ORCS" id="856254">
    <property type="hits" value="1 hit in 10 CRISPR screens"/>
</dbReference>
<dbReference type="EvolutionaryTrace" id="Q01454"/>
<dbReference type="PRO" id="PR:Q01454"/>
<dbReference type="Proteomes" id="UP000002311">
    <property type="component" value="Chromosome XVI"/>
</dbReference>
<dbReference type="RNAct" id="Q01454">
    <property type="molecule type" value="protein"/>
</dbReference>
<dbReference type="GO" id="GO:0035361">
    <property type="term" value="C:Cul8-RING ubiquitin ligase complex"/>
    <property type="evidence" value="ECO:0000303"/>
    <property type="project" value="ComplexPortal"/>
</dbReference>
<dbReference type="GO" id="GO:0000228">
    <property type="term" value="C:nuclear chromosome"/>
    <property type="evidence" value="ECO:0000314"/>
    <property type="project" value="SGD"/>
</dbReference>
<dbReference type="GO" id="GO:0043596">
    <property type="term" value="C:nuclear replication fork"/>
    <property type="evidence" value="ECO:0000314"/>
    <property type="project" value="SGD"/>
</dbReference>
<dbReference type="GO" id="GO:0005634">
    <property type="term" value="C:nucleus"/>
    <property type="evidence" value="ECO:0007005"/>
    <property type="project" value="SGD"/>
</dbReference>
<dbReference type="GO" id="GO:0003682">
    <property type="term" value="F:chromatin binding"/>
    <property type="evidence" value="ECO:0000314"/>
    <property type="project" value="SGD"/>
</dbReference>
<dbReference type="GO" id="GO:0042802">
    <property type="term" value="F:identical protein binding"/>
    <property type="evidence" value="ECO:0000353"/>
    <property type="project" value="IntAct"/>
</dbReference>
<dbReference type="GO" id="GO:0006281">
    <property type="term" value="P:DNA repair"/>
    <property type="evidence" value="ECO:0000315"/>
    <property type="project" value="SGD"/>
</dbReference>
<dbReference type="GO" id="GO:0006270">
    <property type="term" value="P:DNA replication initiation"/>
    <property type="evidence" value="ECO:0000315"/>
    <property type="project" value="SGD"/>
</dbReference>
<dbReference type="GO" id="GO:0006261">
    <property type="term" value="P:DNA-templated DNA replication"/>
    <property type="evidence" value="ECO:0000315"/>
    <property type="project" value="SGD"/>
</dbReference>
<dbReference type="GO" id="GO:0000727">
    <property type="term" value="P:double-strand break repair via break-induced replication"/>
    <property type="evidence" value="ECO:0000315"/>
    <property type="project" value="SGD"/>
</dbReference>
<dbReference type="GO" id="GO:0034085">
    <property type="term" value="P:establishment of sister chromatid cohesion"/>
    <property type="evidence" value="ECO:0000315"/>
    <property type="project" value="SGD"/>
</dbReference>
<dbReference type="GO" id="GO:0000278">
    <property type="term" value="P:mitotic cell cycle"/>
    <property type="evidence" value="ECO:0000318"/>
    <property type="project" value="GO_Central"/>
</dbReference>
<dbReference type="GO" id="GO:0007064">
    <property type="term" value="P:mitotic sister chromatid cohesion"/>
    <property type="evidence" value="ECO:0000315"/>
    <property type="project" value="SGD"/>
</dbReference>
<dbReference type="GO" id="GO:0006334">
    <property type="term" value="P:nucleosome assembly"/>
    <property type="evidence" value="ECO:0000303"/>
    <property type="project" value="ComplexPortal"/>
</dbReference>
<dbReference type="FunFam" id="2.130.10.10:FF:001041">
    <property type="entry name" value="CTF4p Chromatin-associated protein"/>
    <property type="match status" value="1"/>
</dbReference>
<dbReference type="Gene3D" id="2.130.10.10">
    <property type="entry name" value="YVTN repeat-like/Quinoprotein amine dehydrogenase"/>
    <property type="match status" value="2"/>
</dbReference>
<dbReference type="InterPro" id="IPR015943">
    <property type="entry name" value="WD40/YVTN_repeat-like_dom_sf"/>
</dbReference>
<dbReference type="InterPro" id="IPR036322">
    <property type="entry name" value="WD40_repeat_dom_sf"/>
</dbReference>
<dbReference type="InterPro" id="IPR022100">
    <property type="entry name" value="WDHD1/CFT4_beta-prop_2nd"/>
</dbReference>
<dbReference type="InterPro" id="IPR048591">
    <property type="entry name" value="WDHD1/CFT4_hel"/>
</dbReference>
<dbReference type="PANTHER" id="PTHR19932">
    <property type="entry name" value="WD REPEAT AND HMG-BOX DNA BINDING PROTEIN"/>
    <property type="match status" value="1"/>
</dbReference>
<dbReference type="PANTHER" id="PTHR19932:SF10">
    <property type="entry name" value="WD REPEAT AND HMG-BOX DNA-BINDING PROTEIN 1"/>
    <property type="match status" value="1"/>
</dbReference>
<dbReference type="Pfam" id="PF20946">
    <property type="entry name" value="Ctf4_C"/>
    <property type="match status" value="1"/>
</dbReference>
<dbReference type="Pfam" id="PF12341">
    <property type="entry name" value="Mcl1_mid"/>
    <property type="match status" value="1"/>
</dbReference>
<dbReference type="SUPFAM" id="SSF50978">
    <property type="entry name" value="WD40 repeat-like"/>
    <property type="match status" value="1"/>
</dbReference>
<accession>Q01454</accession>
<accession>D6W4D2</accession>
<sequence>MVSVIDKLVFDFGGKTLVSLAPDNNTLCVANKNGLTKILKTNNPEEEPETLDSSKLVSSIKCYSNSHFLMTTMQGDALRYNIDSSQEELLARFALPLRDCCVIHSGKMAVFGGDDLELILLELDDETHKKHAIKIDEQVSQISYNSQMNILAVSMINGKVQIFSLTSTIPNKVHELNDYIVANSYDDTHRDKILSNMMDDIDKDNDNDLSETADPDENNVADPEFCAANRICTRVAWHPKGLHFALPCADDTVKIFSIKGYSLQKTLSTNLSSTKAHFIDLQFDPLRGTYIAAVDLNNKLTVWNWETSEIHYTREFKRKITNIAWKIQADSKTLDLVLGTWSGSIAIVQNLAESVVSNIPDQSVAESSTKHGLFVDSESDLENLEGNDDINKSDKLFSDITQEANAEDVFTQTHDGPSGLSEKRKYNFEDEEDFIDDDDGAGYISGKKPHNEHSYSRVHKTHSFPISLANTGKFRYMPFSPAGTPFGFTDRRYLTMNEVGYVSTVKNSEQYSITVSFFDVGRFREYHFEDLFGYDLCFLNEKGTLFGQSKTGQIQYRPHDSIHSNWTKIIPLQAGERITSVAATPVRVIVGTSLGYFRSFNQFGVPFAVEKTSPIVALTAQNYRVFSVHYSQFHGLSYSLSELGTSSKRYYKRECPLPMSLPNINSDMKKDANLDYYNFNPMGIKSLFFSSYGDPCIFGSDNTLLLLSKWRSPEESKWLPILDSNMEIWKMSGGKETTDIHVWPLALAYDTLNCILVKGKHIWPEFPLPLPSEMEIRMPVFVKSKLLEENKAILNKKNEIGADTEAEEGEEDKEIQIPVSMAAEEEYLRSKVLSELLTDTLENDGEMYGNENEVLAALNGAYDKALLRLFASACSDQNVEKALSLAHELKQDRALTAAVKISERAELPSLVKKINNIREARYEQQLK</sequence>
<feature type="initiator methionine" description="Removed" evidence="1">
    <location>
        <position position="1"/>
    </location>
</feature>
<feature type="chain" id="PRO_0000050948" description="DNA polymerase alpha-binding protein">
    <location>
        <begin position="2"/>
        <end position="927"/>
    </location>
</feature>
<feature type="repeat" description="WD 1">
    <location>
        <begin position="10"/>
        <end position="49"/>
    </location>
</feature>
<feature type="repeat" description="WD 2">
    <location>
        <begin position="134"/>
        <end position="173"/>
    </location>
</feature>
<feature type="repeat" description="WD 3">
    <location>
        <begin position="227"/>
        <end position="266"/>
    </location>
</feature>
<feature type="repeat" description="WD 4">
    <location>
        <begin position="273"/>
        <end position="313"/>
    </location>
</feature>
<feature type="repeat" description="WD 5">
    <location>
        <begin position="699"/>
        <end position="739"/>
    </location>
</feature>
<feature type="modified residue" description="Phosphoserine" evidence="4 5 6">
    <location>
        <position position="377"/>
    </location>
</feature>
<feature type="modified residue" description="Phosphoserine" evidence="4 5 6">
    <location>
        <position position="379"/>
    </location>
</feature>
<feature type="modified residue" description="Phosphoserine" evidence="6">
    <location>
        <position position="398"/>
    </location>
</feature>
<feature type="modified residue" description="Phosphothreonine" evidence="5">
    <location>
        <position position="401"/>
    </location>
</feature>
<feature type="modified residue" description="Phosphothreonine" evidence="5">
    <location>
        <position position="411"/>
    </location>
</feature>
<feature type="modified residue" description="Phosphoserine" evidence="5">
    <location>
        <position position="463"/>
    </location>
</feature>
<feature type="sequence conflict" description="In Ref. 2 and 4." evidence="3" ref="2 4">
    <original>G</original>
    <variation>E</variation>
    <location>
        <position position="112"/>
    </location>
</feature>
<feature type="sequence conflict" description="In Ref. 2." evidence="3" ref="2">
    <original>V</original>
    <variation>F</variation>
    <location>
        <position position="588"/>
    </location>
</feature>
<feature type="sequence conflict" description="In Ref. 2." evidence="3" ref="2">
    <original>V</original>
    <variation>F</variation>
    <location>
        <position position="590"/>
    </location>
</feature>
<feature type="sequence conflict" description="In Ref. 2." evidence="3" ref="2">
    <original>N</original>
    <variation>I</variation>
    <location>
        <position position="601"/>
    </location>
</feature>
<feature type="sequence conflict" description="In Ref. 2." evidence="3" ref="2">
    <original>E</original>
    <variation>K</variation>
    <location>
        <position position="835"/>
    </location>
</feature>
<feature type="strand" evidence="9">
    <location>
        <begin position="489"/>
        <end position="496"/>
    </location>
</feature>
<feature type="strand" evidence="9">
    <location>
        <begin position="498"/>
        <end position="507"/>
    </location>
</feature>
<feature type="strand" evidence="9">
    <location>
        <begin position="510"/>
        <end position="519"/>
    </location>
</feature>
<feature type="turn" evidence="9">
    <location>
        <begin position="520"/>
        <end position="522"/>
    </location>
</feature>
<feature type="strand" evidence="9">
    <location>
        <begin position="526"/>
        <end position="532"/>
    </location>
</feature>
<feature type="strand" evidence="9">
    <location>
        <begin position="536"/>
        <end position="539"/>
    </location>
</feature>
<feature type="strand" evidence="9">
    <location>
        <begin position="541"/>
        <end position="547"/>
    </location>
</feature>
<feature type="turn" evidence="9">
    <location>
        <begin position="549"/>
        <end position="551"/>
    </location>
</feature>
<feature type="strand" evidence="9">
    <location>
        <begin position="553"/>
        <end position="560"/>
    </location>
</feature>
<feature type="strand" evidence="9">
    <location>
        <begin position="566"/>
        <end position="569"/>
    </location>
</feature>
<feature type="strand" evidence="9">
    <location>
        <begin position="578"/>
        <end position="583"/>
    </location>
</feature>
<feature type="strand" evidence="9">
    <location>
        <begin position="588"/>
        <end position="592"/>
    </location>
</feature>
<feature type="strand" evidence="9">
    <location>
        <begin position="596"/>
        <end position="600"/>
    </location>
</feature>
<feature type="strand" evidence="9">
    <location>
        <begin position="606"/>
        <end position="611"/>
    </location>
</feature>
<feature type="strand" evidence="9">
    <location>
        <begin position="615"/>
        <end position="621"/>
    </location>
</feature>
<feature type="strand" evidence="9">
    <location>
        <begin position="624"/>
        <end position="631"/>
    </location>
</feature>
<feature type="turn" evidence="9">
    <location>
        <begin position="632"/>
        <end position="634"/>
    </location>
</feature>
<feature type="strand" evidence="9">
    <location>
        <begin position="635"/>
        <end position="643"/>
    </location>
</feature>
<feature type="strand" evidence="10">
    <location>
        <begin position="645"/>
        <end position="647"/>
    </location>
</feature>
<feature type="strand" evidence="9">
    <location>
        <begin position="648"/>
        <end position="656"/>
    </location>
</feature>
<feature type="helix" evidence="9">
    <location>
        <begin position="667"/>
        <end position="670"/>
    </location>
</feature>
<feature type="helix" evidence="9">
    <location>
        <begin position="674"/>
        <end position="679"/>
    </location>
</feature>
<feature type="strand" evidence="9">
    <location>
        <begin position="686"/>
        <end position="689"/>
    </location>
</feature>
<feature type="strand" evidence="9">
    <location>
        <begin position="695"/>
        <end position="698"/>
    </location>
</feature>
<feature type="strand" evidence="9">
    <location>
        <begin position="703"/>
        <end position="709"/>
    </location>
</feature>
<feature type="turn" evidence="9">
    <location>
        <begin position="713"/>
        <end position="715"/>
    </location>
</feature>
<feature type="strand" evidence="9">
    <location>
        <begin position="717"/>
        <end position="723"/>
    </location>
</feature>
<feature type="helix" evidence="9">
    <location>
        <begin position="724"/>
        <end position="731"/>
    </location>
</feature>
<feature type="turn" evidence="8">
    <location>
        <begin position="732"/>
        <end position="734"/>
    </location>
</feature>
<feature type="strand" evidence="9">
    <location>
        <begin position="738"/>
        <end position="748"/>
    </location>
</feature>
<feature type="strand" evidence="9">
    <location>
        <begin position="751"/>
        <end position="763"/>
    </location>
</feature>
<feature type="strand" evidence="9">
    <location>
        <begin position="772"/>
        <end position="775"/>
    </location>
</feature>
<feature type="helix" evidence="9">
    <location>
        <begin position="783"/>
        <end position="788"/>
    </location>
</feature>
<feature type="helix" evidence="7">
    <location>
        <begin position="792"/>
        <end position="795"/>
    </location>
</feature>
<feature type="helix" evidence="9">
    <location>
        <begin position="819"/>
        <end position="843"/>
    </location>
</feature>
<feature type="strand" evidence="9">
    <location>
        <begin position="847"/>
        <end position="849"/>
    </location>
</feature>
<feature type="helix" evidence="9">
    <location>
        <begin position="851"/>
        <end position="875"/>
    </location>
</feature>
<feature type="helix" evidence="9">
    <location>
        <begin position="879"/>
        <end position="887"/>
    </location>
</feature>
<feature type="helix" evidence="9">
    <location>
        <begin position="892"/>
        <end position="904"/>
    </location>
</feature>
<feature type="helix" evidence="9">
    <location>
        <begin position="908"/>
        <end position="925"/>
    </location>
</feature>
<name>CTF4_YEAST</name>